<gene>
    <name evidence="1" type="primary">lepA</name>
    <name type="ordered locus">AMF_393</name>
</gene>
<reference key="1">
    <citation type="journal article" date="2009" name="BMC Genomics">
        <title>Conservation in the face of diversity: multistrain analysis of an intracellular bacterium.</title>
        <authorList>
            <person name="Dark M.J."/>
            <person name="Herndon D.R."/>
            <person name="Kappmeyer L.S."/>
            <person name="Gonzales M.P."/>
            <person name="Nordeen E."/>
            <person name="Palmer G.H."/>
            <person name="Knowles D.P. Jr."/>
            <person name="Brayton K.A."/>
        </authorList>
    </citation>
    <scope>NUCLEOTIDE SEQUENCE [LARGE SCALE GENOMIC DNA]</scope>
    <source>
        <strain>Florida</strain>
    </source>
</reference>
<proteinExistence type="inferred from homology"/>
<evidence type="ECO:0000255" key="1">
    <source>
        <dbReference type="HAMAP-Rule" id="MF_00071"/>
    </source>
</evidence>
<sequence>MVGESTIRNFAIIAHIDHGKSTLADRLIEACNALSDRDMKDQVLDSMDIERERGITIKAQTVRLTYAAKDGVVYHLNLVDTPGHVDFSYEVSRSLAACEGSLLVIDSSQGVEAQTLANVYKAIENDHEIVTVLNKADLASSDPERVKSQVEEIIGLDASGALLISAKTGMGISDVLEAIVHRLPAPVGDANAPLKAILVDSWYDPYLGIVILLRVKDGVLKKGMKVAMLSTGAVYQVDNVGVFTPNKQMVDSLSVGEIGFITAGIKEIADCKVGDTLTEDSRRCDNPFPGFRATCPVVFCSLFPVDASSFEHLREALGKLQLNDSSFTFDMESSTALGYGFRCGFLGMLHLEVVQERLEREFDLDLTATAPSVVYRVTDKHRVTKEVHNPNDLPESHEILGVEEPWIAATIMVPDQYLGSILALCNSKRGEKVDLSYTGSMALLKYRLPLAEVVFDFYDSLKSVSKGYASLDWYVDGYVPTEISKLTILINSEPVDALSCIIHKSKVESRGREICERLKDLIPRQQYKVAIQAAVGAKIVARETISPYRKDVTAKVYGRDVTRKMKLLEKQKKGKKRLRSIGNVNVPQSAFIQALKMKD</sequence>
<protein>
    <recommendedName>
        <fullName evidence="1">Elongation factor 4</fullName>
        <shortName evidence="1">EF-4</shortName>
        <ecNumber evidence="1">3.6.5.n1</ecNumber>
    </recommendedName>
    <alternativeName>
        <fullName evidence="1">Ribosomal back-translocase LepA</fullName>
    </alternativeName>
</protein>
<organism>
    <name type="scientific">Anaplasma marginale (strain Florida)</name>
    <dbReference type="NCBI Taxonomy" id="320483"/>
    <lineage>
        <taxon>Bacteria</taxon>
        <taxon>Pseudomonadati</taxon>
        <taxon>Pseudomonadota</taxon>
        <taxon>Alphaproteobacteria</taxon>
        <taxon>Rickettsiales</taxon>
        <taxon>Anaplasmataceae</taxon>
        <taxon>Anaplasma</taxon>
    </lineage>
</organism>
<keyword id="KW-0997">Cell inner membrane</keyword>
<keyword id="KW-1003">Cell membrane</keyword>
<keyword id="KW-0342">GTP-binding</keyword>
<keyword id="KW-0378">Hydrolase</keyword>
<keyword id="KW-0472">Membrane</keyword>
<keyword id="KW-0547">Nucleotide-binding</keyword>
<keyword id="KW-0648">Protein biosynthesis</keyword>
<keyword id="KW-1185">Reference proteome</keyword>
<name>LEPA_ANAMF</name>
<feature type="chain" id="PRO_1000118030" description="Elongation factor 4">
    <location>
        <begin position="1"/>
        <end position="599"/>
    </location>
</feature>
<feature type="domain" description="tr-type G">
    <location>
        <begin position="5"/>
        <end position="187"/>
    </location>
</feature>
<feature type="binding site" evidence="1">
    <location>
        <begin position="17"/>
        <end position="22"/>
    </location>
    <ligand>
        <name>GTP</name>
        <dbReference type="ChEBI" id="CHEBI:37565"/>
    </ligand>
</feature>
<feature type="binding site" evidence="1">
    <location>
        <begin position="134"/>
        <end position="137"/>
    </location>
    <ligand>
        <name>GTP</name>
        <dbReference type="ChEBI" id="CHEBI:37565"/>
    </ligand>
</feature>
<comment type="function">
    <text evidence="1">Required for accurate and efficient protein synthesis under certain stress conditions. May act as a fidelity factor of the translation reaction, by catalyzing a one-codon backward translocation of tRNAs on improperly translocated ribosomes. Back-translocation proceeds from a post-translocation (POST) complex to a pre-translocation (PRE) complex, thus giving elongation factor G a second chance to translocate the tRNAs correctly. Binds to ribosomes in a GTP-dependent manner.</text>
</comment>
<comment type="catalytic activity">
    <reaction evidence="1">
        <text>GTP + H2O = GDP + phosphate + H(+)</text>
        <dbReference type="Rhea" id="RHEA:19669"/>
        <dbReference type="ChEBI" id="CHEBI:15377"/>
        <dbReference type="ChEBI" id="CHEBI:15378"/>
        <dbReference type="ChEBI" id="CHEBI:37565"/>
        <dbReference type="ChEBI" id="CHEBI:43474"/>
        <dbReference type="ChEBI" id="CHEBI:58189"/>
        <dbReference type="EC" id="3.6.5.n1"/>
    </reaction>
</comment>
<comment type="subcellular location">
    <subcellularLocation>
        <location evidence="1">Cell inner membrane</location>
        <topology evidence="1">Peripheral membrane protein</topology>
        <orientation evidence="1">Cytoplasmic side</orientation>
    </subcellularLocation>
</comment>
<comment type="similarity">
    <text evidence="1">Belongs to the TRAFAC class translation factor GTPase superfamily. Classic translation factor GTPase family. LepA subfamily.</text>
</comment>
<dbReference type="EC" id="3.6.5.n1" evidence="1"/>
<dbReference type="EMBL" id="CP001079">
    <property type="protein sequence ID" value="ACM49257.1"/>
    <property type="molecule type" value="Genomic_DNA"/>
</dbReference>
<dbReference type="SMR" id="B9KIE5"/>
<dbReference type="STRING" id="320483.AMF_393"/>
<dbReference type="KEGG" id="amf:AMF_393"/>
<dbReference type="eggNOG" id="COG0481">
    <property type="taxonomic scope" value="Bacteria"/>
</dbReference>
<dbReference type="HOGENOM" id="CLU_009995_3_3_5"/>
<dbReference type="Proteomes" id="UP000007307">
    <property type="component" value="Chromosome"/>
</dbReference>
<dbReference type="GO" id="GO:0005886">
    <property type="term" value="C:plasma membrane"/>
    <property type="evidence" value="ECO:0007669"/>
    <property type="project" value="UniProtKB-SubCell"/>
</dbReference>
<dbReference type="GO" id="GO:0005525">
    <property type="term" value="F:GTP binding"/>
    <property type="evidence" value="ECO:0007669"/>
    <property type="project" value="UniProtKB-UniRule"/>
</dbReference>
<dbReference type="GO" id="GO:0003924">
    <property type="term" value="F:GTPase activity"/>
    <property type="evidence" value="ECO:0007669"/>
    <property type="project" value="UniProtKB-UniRule"/>
</dbReference>
<dbReference type="GO" id="GO:0097216">
    <property type="term" value="F:guanosine tetraphosphate binding"/>
    <property type="evidence" value="ECO:0007669"/>
    <property type="project" value="UniProtKB-ARBA"/>
</dbReference>
<dbReference type="GO" id="GO:0043022">
    <property type="term" value="F:ribosome binding"/>
    <property type="evidence" value="ECO:0007669"/>
    <property type="project" value="UniProtKB-UniRule"/>
</dbReference>
<dbReference type="GO" id="GO:0003746">
    <property type="term" value="F:translation elongation factor activity"/>
    <property type="evidence" value="ECO:0007669"/>
    <property type="project" value="UniProtKB-UniRule"/>
</dbReference>
<dbReference type="GO" id="GO:0045727">
    <property type="term" value="P:positive regulation of translation"/>
    <property type="evidence" value="ECO:0007669"/>
    <property type="project" value="UniProtKB-UniRule"/>
</dbReference>
<dbReference type="CDD" id="cd03699">
    <property type="entry name" value="EF4_II"/>
    <property type="match status" value="1"/>
</dbReference>
<dbReference type="CDD" id="cd16260">
    <property type="entry name" value="EF4_III"/>
    <property type="match status" value="1"/>
</dbReference>
<dbReference type="CDD" id="cd01890">
    <property type="entry name" value="LepA"/>
    <property type="match status" value="1"/>
</dbReference>
<dbReference type="CDD" id="cd03709">
    <property type="entry name" value="lepA_C"/>
    <property type="match status" value="1"/>
</dbReference>
<dbReference type="FunFam" id="3.40.50.300:FF:000078">
    <property type="entry name" value="Elongation factor 4"/>
    <property type="match status" value="1"/>
</dbReference>
<dbReference type="FunFam" id="2.40.30.10:FF:000015">
    <property type="entry name" value="Translation factor GUF1, mitochondrial"/>
    <property type="match status" value="1"/>
</dbReference>
<dbReference type="FunFam" id="3.30.70.240:FF:000007">
    <property type="entry name" value="Translation factor GUF1, mitochondrial"/>
    <property type="match status" value="1"/>
</dbReference>
<dbReference type="FunFam" id="3.30.70.2570:FF:000001">
    <property type="entry name" value="Translation factor GUF1, mitochondrial"/>
    <property type="match status" value="1"/>
</dbReference>
<dbReference type="FunFam" id="3.30.70.870:FF:000004">
    <property type="entry name" value="Translation factor GUF1, mitochondrial"/>
    <property type="match status" value="1"/>
</dbReference>
<dbReference type="Gene3D" id="3.30.70.240">
    <property type="match status" value="1"/>
</dbReference>
<dbReference type="Gene3D" id="3.30.70.2570">
    <property type="entry name" value="Elongation factor 4, C-terminal domain"/>
    <property type="match status" value="1"/>
</dbReference>
<dbReference type="Gene3D" id="3.30.70.870">
    <property type="entry name" value="Elongation Factor G (Translational Gtpase), domain 3"/>
    <property type="match status" value="1"/>
</dbReference>
<dbReference type="Gene3D" id="3.40.50.300">
    <property type="entry name" value="P-loop containing nucleotide triphosphate hydrolases"/>
    <property type="match status" value="1"/>
</dbReference>
<dbReference type="Gene3D" id="2.40.30.10">
    <property type="entry name" value="Translation factors"/>
    <property type="match status" value="1"/>
</dbReference>
<dbReference type="HAMAP" id="MF_00071">
    <property type="entry name" value="LepA"/>
    <property type="match status" value="1"/>
</dbReference>
<dbReference type="InterPro" id="IPR006297">
    <property type="entry name" value="EF-4"/>
</dbReference>
<dbReference type="InterPro" id="IPR041095">
    <property type="entry name" value="EFG_II"/>
</dbReference>
<dbReference type="InterPro" id="IPR035647">
    <property type="entry name" value="EFG_III/V"/>
</dbReference>
<dbReference type="InterPro" id="IPR000640">
    <property type="entry name" value="EFG_V-like"/>
</dbReference>
<dbReference type="InterPro" id="IPR004161">
    <property type="entry name" value="EFTu-like_2"/>
</dbReference>
<dbReference type="InterPro" id="IPR031157">
    <property type="entry name" value="G_TR_CS"/>
</dbReference>
<dbReference type="InterPro" id="IPR038363">
    <property type="entry name" value="LepA_C_sf"/>
</dbReference>
<dbReference type="InterPro" id="IPR013842">
    <property type="entry name" value="LepA_CTD"/>
</dbReference>
<dbReference type="InterPro" id="IPR035654">
    <property type="entry name" value="LepA_IV"/>
</dbReference>
<dbReference type="InterPro" id="IPR027417">
    <property type="entry name" value="P-loop_NTPase"/>
</dbReference>
<dbReference type="InterPro" id="IPR005225">
    <property type="entry name" value="Small_GTP-bd"/>
</dbReference>
<dbReference type="InterPro" id="IPR000795">
    <property type="entry name" value="T_Tr_GTP-bd_dom"/>
</dbReference>
<dbReference type="NCBIfam" id="TIGR01393">
    <property type="entry name" value="lepA"/>
    <property type="match status" value="1"/>
</dbReference>
<dbReference type="NCBIfam" id="TIGR00231">
    <property type="entry name" value="small_GTP"/>
    <property type="match status" value="1"/>
</dbReference>
<dbReference type="PANTHER" id="PTHR43512:SF4">
    <property type="entry name" value="TRANSLATION FACTOR GUF1 HOMOLOG, CHLOROPLASTIC"/>
    <property type="match status" value="1"/>
</dbReference>
<dbReference type="PANTHER" id="PTHR43512">
    <property type="entry name" value="TRANSLATION FACTOR GUF1-RELATED"/>
    <property type="match status" value="1"/>
</dbReference>
<dbReference type="Pfam" id="PF00679">
    <property type="entry name" value="EFG_C"/>
    <property type="match status" value="1"/>
</dbReference>
<dbReference type="Pfam" id="PF14492">
    <property type="entry name" value="EFG_III"/>
    <property type="match status" value="1"/>
</dbReference>
<dbReference type="Pfam" id="PF00009">
    <property type="entry name" value="GTP_EFTU"/>
    <property type="match status" value="1"/>
</dbReference>
<dbReference type="Pfam" id="PF03144">
    <property type="entry name" value="GTP_EFTU_D2"/>
    <property type="match status" value="1"/>
</dbReference>
<dbReference type="Pfam" id="PF06421">
    <property type="entry name" value="LepA_C"/>
    <property type="match status" value="1"/>
</dbReference>
<dbReference type="PRINTS" id="PR00315">
    <property type="entry name" value="ELONGATNFCT"/>
</dbReference>
<dbReference type="SMART" id="SM00838">
    <property type="entry name" value="EFG_C"/>
    <property type="match status" value="1"/>
</dbReference>
<dbReference type="SUPFAM" id="SSF54980">
    <property type="entry name" value="EF-G C-terminal domain-like"/>
    <property type="match status" value="2"/>
</dbReference>
<dbReference type="SUPFAM" id="SSF52540">
    <property type="entry name" value="P-loop containing nucleoside triphosphate hydrolases"/>
    <property type="match status" value="1"/>
</dbReference>
<dbReference type="PROSITE" id="PS00301">
    <property type="entry name" value="G_TR_1"/>
    <property type="match status" value="1"/>
</dbReference>
<dbReference type="PROSITE" id="PS51722">
    <property type="entry name" value="G_TR_2"/>
    <property type="match status" value="1"/>
</dbReference>
<accession>B9KIE5</accession>